<organism>
    <name type="scientific">Escherichia coli O139:H28 (strain E24377A / ETEC)</name>
    <dbReference type="NCBI Taxonomy" id="331111"/>
    <lineage>
        <taxon>Bacteria</taxon>
        <taxon>Pseudomonadati</taxon>
        <taxon>Pseudomonadota</taxon>
        <taxon>Gammaproteobacteria</taxon>
        <taxon>Enterobacterales</taxon>
        <taxon>Enterobacteriaceae</taxon>
        <taxon>Escherichia</taxon>
    </lineage>
</organism>
<reference key="1">
    <citation type="journal article" date="2008" name="J. Bacteriol.">
        <title>The pangenome structure of Escherichia coli: comparative genomic analysis of E. coli commensal and pathogenic isolates.</title>
        <authorList>
            <person name="Rasko D.A."/>
            <person name="Rosovitz M.J."/>
            <person name="Myers G.S.A."/>
            <person name="Mongodin E.F."/>
            <person name="Fricke W.F."/>
            <person name="Gajer P."/>
            <person name="Crabtree J."/>
            <person name="Sebaihia M."/>
            <person name="Thomson N.R."/>
            <person name="Chaudhuri R."/>
            <person name="Henderson I.R."/>
            <person name="Sperandio V."/>
            <person name="Ravel J."/>
        </authorList>
    </citation>
    <scope>NUCLEOTIDE SEQUENCE [LARGE SCALE GENOMIC DNA]</scope>
    <source>
        <strain>E24377A / ETEC</strain>
    </source>
</reference>
<protein>
    <recommendedName>
        <fullName evidence="1">Cell division topological specificity factor</fullName>
    </recommendedName>
</protein>
<sequence>MALLDFFLSRKKNTANIAKERLQIIVAERRRSDAEPHYLPQLRKDILEVICKYVQIDPEMVTVQLEQKDGDISILELNVTLPEAEELK</sequence>
<feature type="chain" id="PRO_1000059109" description="Cell division topological specificity factor">
    <location>
        <begin position="1"/>
        <end position="88"/>
    </location>
</feature>
<keyword id="KW-0131">Cell cycle</keyword>
<keyword id="KW-0132">Cell division</keyword>
<keyword id="KW-1185">Reference proteome</keyword>
<evidence type="ECO:0000255" key="1">
    <source>
        <dbReference type="HAMAP-Rule" id="MF_00262"/>
    </source>
</evidence>
<name>MINE_ECO24</name>
<proteinExistence type="inferred from homology"/>
<gene>
    <name evidence="1" type="primary">minE</name>
    <name type="ordered locus">EcE24377A_1318</name>
</gene>
<comment type="function">
    <text evidence="1">Prevents the cell division inhibition by proteins MinC and MinD at internal division sites while permitting inhibition at polar sites. This ensures cell division at the proper site by restricting the formation of a division septum at the midpoint of the long axis of the cell.</text>
</comment>
<comment type="similarity">
    <text evidence="1">Belongs to the MinE family.</text>
</comment>
<accession>A7ZKU5</accession>
<dbReference type="EMBL" id="CP000800">
    <property type="protein sequence ID" value="ABV16510.1"/>
    <property type="molecule type" value="Genomic_DNA"/>
</dbReference>
<dbReference type="RefSeq" id="WP_001185665.1">
    <property type="nucleotide sequence ID" value="NC_009801.1"/>
</dbReference>
<dbReference type="BMRB" id="A7ZKU5"/>
<dbReference type="SMR" id="A7ZKU5"/>
<dbReference type="GeneID" id="93776260"/>
<dbReference type="KEGG" id="ecw:EcE24377A_1318"/>
<dbReference type="HOGENOM" id="CLU_137929_2_2_6"/>
<dbReference type="Proteomes" id="UP000001122">
    <property type="component" value="Chromosome"/>
</dbReference>
<dbReference type="GO" id="GO:0051301">
    <property type="term" value="P:cell division"/>
    <property type="evidence" value="ECO:0007669"/>
    <property type="project" value="UniProtKB-KW"/>
</dbReference>
<dbReference type="GO" id="GO:0032955">
    <property type="term" value="P:regulation of division septum assembly"/>
    <property type="evidence" value="ECO:0007669"/>
    <property type="project" value="InterPro"/>
</dbReference>
<dbReference type="FunFam" id="3.30.1070.10:FF:000001">
    <property type="entry name" value="Cell division topological specificity factor"/>
    <property type="match status" value="1"/>
</dbReference>
<dbReference type="Gene3D" id="3.30.1070.10">
    <property type="entry name" value="Cell division topological specificity factor MinE"/>
    <property type="match status" value="1"/>
</dbReference>
<dbReference type="HAMAP" id="MF_00262">
    <property type="entry name" value="MinE"/>
    <property type="match status" value="1"/>
</dbReference>
<dbReference type="InterPro" id="IPR005527">
    <property type="entry name" value="MinE"/>
</dbReference>
<dbReference type="InterPro" id="IPR036707">
    <property type="entry name" value="MinE_sf"/>
</dbReference>
<dbReference type="NCBIfam" id="TIGR01215">
    <property type="entry name" value="minE"/>
    <property type="match status" value="1"/>
</dbReference>
<dbReference type="NCBIfam" id="NF001422">
    <property type="entry name" value="PRK00296.1"/>
    <property type="match status" value="1"/>
</dbReference>
<dbReference type="Pfam" id="PF03776">
    <property type="entry name" value="MinE"/>
    <property type="match status" value="1"/>
</dbReference>
<dbReference type="SUPFAM" id="SSF55229">
    <property type="entry name" value="Cell division protein MinE topological specificity domain"/>
    <property type="match status" value="1"/>
</dbReference>